<gene>
    <name type="primary">Zgpat</name>
</gene>
<comment type="function">
    <text evidence="1">Transcription repressor that specifically binds the 5'-GGAG[GA]A[GA]A-3' consensus sequence. Represses transcription by recruiting the chromatin multiprotein complex NuRD to target promoters. Negatively regulates expression of EGFR, a gene involved in cell proliferation, survival and migration. Its ability to repress genes of the EGFR pathway suggest it may act as a tumor suppressor (By similarity).</text>
</comment>
<comment type="subunit">
    <text evidence="1">Interacts with CHD4/Mi-2; the interaction is direct.</text>
</comment>
<comment type="subcellular location">
    <subcellularLocation>
        <location evidence="1">Nucleus</location>
    </subcellularLocation>
</comment>
<sequence>MDEDNLETALQTYRAQLQQVELALGAGLDASEQADLRQLQGDLKELIELTEASLLSVRKSKLLSTVDQEHQEDAEYLAFQKAIAEEAPVDPGNDSKTVPGSEVQPTPTSSALEEEEEDPDLEDLSGAKVNAPYYSAWGTLEYHNAMVVGAEEAEDGSACVRVLYLYPTHKSLKPCPFFLEGKCRFKENCRFSHGQLVSVDELRPFQDPDLSLLQTGSACLAKHQDGLWHPARITDVDNGYYTVKFDSLLLKEAVVEGDSILPPLRTEATDSSDSDTGDASDSSYARVVEANTVDTGTCSSAFAGWEVHTRGIGSKLLVKMGYEFGKGLGRHAEGRVEPIHAVVLPRGKSLDQCAEILQKKTKQGQTGASRPPRCRRRSSRPEGRPPPRNVFDFLNEKLQSQVPGTPDAGVDTPERRNKDMYHASKSAKQALSLQLFQTEEKIERTQRDIRGIQEALTRNTGRHGMATAHLQEKLEGAQRQLGQLRAQEADLQRKQRKADTHRKMTEF</sequence>
<keyword id="KW-0007">Acetylation</keyword>
<keyword id="KW-0238">DNA-binding</keyword>
<keyword id="KW-0479">Metal-binding</keyword>
<keyword id="KW-0539">Nucleus</keyword>
<keyword id="KW-0597">Phosphoprotein</keyword>
<keyword id="KW-1185">Reference proteome</keyword>
<keyword id="KW-0678">Repressor</keyword>
<keyword id="KW-0804">Transcription</keyword>
<keyword id="KW-0805">Transcription regulation</keyword>
<keyword id="KW-0862">Zinc</keyword>
<keyword id="KW-0863">Zinc-finger</keyword>
<name>ZGPAT_RAT</name>
<reference key="1">
    <citation type="journal article" date="2004" name="Genome Res.">
        <title>The status, quality, and expansion of the NIH full-length cDNA project: the Mammalian Gene Collection (MGC).</title>
        <authorList>
            <consortium name="The MGC Project Team"/>
        </authorList>
    </citation>
    <scope>NUCLEOTIDE SEQUENCE [LARGE SCALE MRNA]</scope>
    <source>
        <tissue>Brain</tissue>
    </source>
</reference>
<organism>
    <name type="scientific">Rattus norvegicus</name>
    <name type="common">Rat</name>
    <dbReference type="NCBI Taxonomy" id="10116"/>
    <lineage>
        <taxon>Eukaryota</taxon>
        <taxon>Metazoa</taxon>
        <taxon>Chordata</taxon>
        <taxon>Craniata</taxon>
        <taxon>Vertebrata</taxon>
        <taxon>Euteleostomi</taxon>
        <taxon>Mammalia</taxon>
        <taxon>Eutheria</taxon>
        <taxon>Euarchontoglires</taxon>
        <taxon>Glires</taxon>
        <taxon>Rodentia</taxon>
        <taxon>Myomorpha</taxon>
        <taxon>Muroidea</taxon>
        <taxon>Muridae</taxon>
        <taxon>Murinae</taxon>
        <taxon>Rattus</taxon>
    </lineage>
</organism>
<accession>Q5PPF5</accession>
<proteinExistence type="evidence at transcript level"/>
<evidence type="ECO:0000250" key="1"/>
<evidence type="ECO:0000250" key="2">
    <source>
        <dbReference type="UniProtKB" id="Q8N5A5"/>
    </source>
</evidence>
<evidence type="ECO:0000250" key="3">
    <source>
        <dbReference type="UniProtKB" id="Q8VDM1"/>
    </source>
</evidence>
<evidence type="ECO:0000255" key="4">
    <source>
        <dbReference type="PROSITE-ProRule" id="PRU00092"/>
    </source>
</evidence>
<evidence type="ECO:0000255" key="5">
    <source>
        <dbReference type="PROSITE-ProRule" id="PRU00723"/>
    </source>
</evidence>
<evidence type="ECO:0000256" key="6">
    <source>
        <dbReference type="SAM" id="MobiDB-lite"/>
    </source>
</evidence>
<protein>
    <recommendedName>
        <fullName>Zinc finger CCCH-type with G patch domain-containing protein</fullName>
    </recommendedName>
</protein>
<feature type="chain" id="PRO_0000385191" description="Zinc finger CCCH-type with G patch domain-containing protein">
    <location>
        <begin position="1"/>
        <end position="507"/>
    </location>
</feature>
<feature type="domain" description="G-patch" evidence="4">
    <location>
        <begin position="309"/>
        <end position="355"/>
    </location>
</feature>
<feature type="zinc finger region" description="C3H1-type" evidence="5">
    <location>
        <begin position="170"/>
        <end position="196"/>
    </location>
</feature>
<feature type="region of interest" description="Disordered" evidence="6">
    <location>
        <begin position="88"/>
        <end position="125"/>
    </location>
</feature>
<feature type="region of interest" description="Disordered" evidence="6">
    <location>
        <begin position="264"/>
        <end position="283"/>
    </location>
</feature>
<feature type="region of interest" description="Disordered" evidence="6">
    <location>
        <begin position="359"/>
        <end position="389"/>
    </location>
</feature>
<feature type="region of interest" description="Disordered" evidence="6">
    <location>
        <begin position="486"/>
        <end position="507"/>
    </location>
</feature>
<feature type="compositionally biased region" description="Polar residues" evidence="6">
    <location>
        <begin position="94"/>
        <end position="111"/>
    </location>
</feature>
<feature type="compositionally biased region" description="Acidic residues" evidence="6">
    <location>
        <begin position="112"/>
        <end position="123"/>
    </location>
</feature>
<feature type="compositionally biased region" description="Basic and acidic residues" evidence="6">
    <location>
        <begin position="487"/>
        <end position="507"/>
    </location>
</feature>
<feature type="modified residue" description="N-acetylmethionine" evidence="2">
    <location>
        <position position="1"/>
    </location>
</feature>
<feature type="modified residue" description="Phosphoserine" evidence="3">
    <location>
        <position position="272"/>
    </location>
</feature>
<feature type="modified residue" description="Phosphothreonine" evidence="3">
    <location>
        <position position="276"/>
    </location>
</feature>
<feature type="modified residue" description="Phosphoserine" evidence="3">
    <location>
        <position position="349"/>
    </location>
</feature>
<dbReference type="EMBL" id="BC087720">
    <property type="protein sequence ID" value="AAH87720.1"/>
    <property type="molecule type" value="mRNA"/>
</dbReference>
<dbReference type="RefSeq" id="NP_001009656.1">
    <property type="nucleotide sequence ID" value="NM_001009656.2"/>
</dbReference>
<dbReference type="RefSeq" id="NP_001417289.1">
    <property type="nucleotide sequence ID" value="NM_001430360.1"/>
</dbReference>
<dbReference type="RefSeq" id="NP_001417290.1">
    <property type="nucleotide sequence ID" value="NM_001430361.1"/>
</dbReference>
<dbReference type="RefSeq" id="XP_006235811.1">
    <property type="nucleotide sequence ID" value="XM_006235749.1"/>
</dbReference>
<dbReference type="RefSeq" id="XP_006235812.1">
    <property type="nucleotide sequence ID" value="XM_006235750.2"/>
</dbReference>
<dbReference type="RefSeq" id="XP_006235813.1">
    <property type="nucleotide sequence ID" value="XM_006235751.2"/>
</dbReference>
<dbReference type="RefSeq" id="XP_006235814.1">
    <property type="nucleotide sequence ID" value="XM_006235752.3"/>
</dbReference>
<dbReference type="SMR" id="Q5PPF5"/>
<dbReference type="FunCoup" id="Q5PPF5">
    <property type="interactions" value="2443"/>
</dbReference>
<dbReference type="STRING" id="10116.ENSRNOP00000019084"/>
<dbReference type="GlyGen" id="Q5PPF5">
    <property type="glycosylation" value="2 sites"/>
</dbReference>
<dbReference type="PhosphoSitePlus" id="Q5PPF5"/>
<dbReference type="jPOST" id="Q5PPF5"/>
<dbReference type="PaxDb" id="10116-ENSRNOP00000019084"/>
<dbReference type="Ensembl" id="ENSRNOT00000019084.8">
    <property type="protein sequence ID" value="ENSRNOP00000019084.4"/>
    <property type="gene ID" value="ENSRNOG00000014235.8"/>
</dbReference>
<dbReference type="GeneID" id="296478"/>
<dbReference type="KEGG" id="rno:296478"/>
<dbReference type="UCSC" id="RGD:1310801">
    <property type="organism name" value="rat"/>
</dbReference>
<dbReference type="AGR" id="RGD:1310801"/>
<dbReference type="CTD" id="84619"/>
<dbReference type="RGD" id="1310801">
    <property type="gene designation" value="Zgpat"/>
</dbReference>
<dbReference type="eggNOG" id="KOG2185">
    <property type="taxonomic scope" value="Eukaryota"/>
</dbReference>
<dbReference type="GeneTree" id="ENSGT00390000000732"/>
<dbReference type="HOGENOM" id="CLU_040504_1_0_1"/>
<dbReference type="InParanoid" id="Q5PPF5"/>
<dbReference type="OMA" id="QYTRGIG"/>
<dbReference type="OrthoDB" id="4822at2759"/>
<dbReference type="PhylomeDB" id="Q5PPF5"/>
<dbReference type="PRO" id="PR:Q5PPF5"/>
<dbReference type="Proteomes" id="UP000002494">
    <property type="component" value="Chromosome 3"/>
</dbReference>
<dbReference type="Bgee" id="ENSRNOG00000014235">
    <property type="expression patterns" value="Expressed in cerebellum and 19 other cell types or tissues"/>
</dbReference>
<dbReference type="GO" id="GO:0005654">
    <property type="term" value="C:nucleoplasm"/>
    <property type="evidence" value="ECO:0007669"/>
    <property type="project" value="Ensembl"/>
</dbReference>
<dbReference type="GO" id="GO:0005634">
    <property type="term" value="C:nucleus"/>
    <property type="evidence" value="ECO:0000250"/>
    <property type="project" value="UniProtKB"/>
</dbReference>
<dbReference type="GO" id="GO:0005886">
    <property type="term" value="C:plasma membrane"/>
    <property type="evidence" value="ECO:0007669"/>
    <property type="project" value="Ensembl"/>
</dbReference>
<dbReference type="GO" id="GO:0003700">
    <property type="term" value="F:DNA-binding transcription factor activity"/>
    <property type="evidence" value="ECO:0000250"/>
    <property type="project" value="UniProtKB"/>
</dbReference>
<dbReference type="GO" id="GO:0001227">
    <property type="term" value="F:DNA-binding transcription repressor activity, RNA polymerase II-specific"/>
    <property type="evidence" value="ECO:0000266"/>
    <property type="project" value="RGD"/>
</dbReference>
<dbReference type="GO" id="GO:0000978">
    <property type="term" value="F:RNA polymerase II cis-regulatory region sequence-specific DNA binding"/>
    <property type="evidence" value="ECO:0000266"/>
    <property type="project" value="RGD"/>
</dbReference>
<dbReference type="GO" id="GO:0043565">
    <property type="term" value="F:sequence-specific DNA binding"/>
    <property type="evidence" value="ECO:0000250"/>
    <property type="project" value="UniProtKB"/>
</dbReference>
<dbReference type="GO" id="GO:0008270">
    <property type="term" value="F:zinc ion binding"/>
    <property type="evidence" value="ECO:0007669"/>
    <property type="project" value="UniProtKB-KW"/>
</dbReference>
<dbReference type="GO" id="GO:0045892">
    <property type="term" value="P:negative regulation of DNA-templated transcription"/>
    <property type="evidence" value="ECO:0000250"/>
    <property type="project" value="UniProtKB"/>
</dbReference>
<dbReference type="GO" id="GO:0007175">
    <property type="term" value="P:negative regulation of epidermal growth factor-activated receptor activity"/>
    <property type="evidence" value="ECO:0000250"/>
    <property type="project" value="UniProtKB"/>
</dbReference>
<dbReference type="GO" id="GO:0000122">
    <property type="term" value="P:negative regulation of transcription by RNA polymerase II"/>
    <property type="evidence" value="ECO:0000266"/>
    <property type="project" value="RGD"/>
</dbReference>
<dbReference type="CDD" id="cd20384">
    <property type="entry name" value="Tudor_ZGPAT"/>
    <property type="match status" value="1"/>
</dbReference>
<dbReference type="FunFam" id="2.30.30.140:FF:000071">
    <property type="entry name" value="Zinc finger CCCH-type with G patch domain-containing protein"/>
    <property type="match status" value="1"/>
</dbReference>
<dbReference type="FunFam" id="2.30.30.1190:FF:000001">
    <property type="entry name" value="zinc finger CCCH-type with G patch domain-containing protein"/>
    <property type="match status" value="1"/>
</dbReference>
<dbReference type="Gene3D" id="2.30.30.1190">
    <property type="match status" value="1"/>
</dbReference>
<dbReference type="Gene3D" id="2.30.30.140">
    <property type="match status" value="1"/>
</dbReference>
<dbReference type="InterPro" id="IPR000467">
    <property type="entry name" value="G_patch_dom"/>
</dbReference>
<dbReference type="InterPro" id="IPR041367">
    <property type="entry name" value="Znf-CCCH_4"/>
</dbReference>
<dbReference type="InterPro" id="IPR000571">
    <property type="entry name" value="Znf_CCCH"/>
</dbReference>
<dbReference type="InterPro" id="IPR036855">
    <property type="entry name" value="Znf_CCCH_sf"/>
</dbReference>
<dbReference type="PANTHER" id="PTHR46297">
    <property type="entry name" value="ZINC FINGER CCCH-TYPE WITH G PATCH DOMAIN-CONTAINING PROTEIN"/>
    <property type="match status" value="1"/>
</dbReference>
<dbReference type="PANTHER" id="PTHR46297:SF1">
    <property type="entry name" value="ZINC FINGER CCCH-TYPE WITH G PATCH DOMAIN-CONTAINING PROTEIN"/>
    <property type="match status" value="1"/>
</dbReference>
<dbReference type="Pfam" id="PF01585">
    <property type="entry name" value="G-patch"/>
    <property type="match status" value="1"/>
</dbReference>
<dbReference type="Pfam" id="PF18044">
    <property type="entry name" value="zf-CCCH_4"/>
    <property type="match status" value="1"/>
</dbReference>
<dbReference type="SMART" id="SM00443">
    <property type="entry name" value="G_patch"/>
    <property type="match status" value="1"/>
</dbReference>
<dbReference type="SMART" id="SM00356">
    <property type="entry name" value="ZnF_C3H1"/>
    <property type="match status" value="1"/>
</dbReference>
<dbReference type="SUPFAM" id="SSF90229">
    <property type="entry name" value="CCCH zinc finger"/>
    <property type="match status" value="1"/>
</dbReference>
<dbReference type="SUPFAM" id="SSF63748">
    <property type="entry name" value="Tudor/PWWP/MBT"/>
    <property type="match status" value="1"/>
</dbReference>
<dbReference type="PROSITE" id="PS50174">
    <property type="entry name" value="G_PATCH"/>
    <property type="match status" value="1"/>
</dbReference>
<dbReference type="PROSITE" id="PS50103">
    <property type="entry name" value="ZF_C3H1"/>
    <property type="match status" value="1"/>
</dbReference>